<gene>
    <name type="primary">SODA.3</name>
    <name type="synonym">SOD3.4</name>
</gene>
<organism>
    <name type="scientific">Zea mays</name>
    <name type="common">Maize</name>
    <dbReference type="NCBI Taxonomy" id="4577"/>
    <lineage>
        <taxon>Eukaryota</taxon>
        <taxon>Viridiplantae</taxon>
        <taxon>Streptophyta</taxon>
        <taxon>Embryophyta</taxon>
        <taxon>Tracheophyta</taxon>
        <taxon>Spermatophyta</taxon>
        <taxon>Magnoliopsida</taxon>
        <taxon>Liliopsida</taxon>
        <taxon>Poales</taxon>
        <taxon>Poaceae</taxon>
        <taxon>PACMAD clade</taxon>
        <taxon>Panicoideae</taxon>
        <taxon>Andropogonodae</taxon>
        <taxon>Andropogoneae</taxon>
        <taxon>Tripsacinae</taxon>
        <taxon>Zea</taxon>
    </lineage>
</organism>
<comment type="function">
    <text>Destroys superoxide anion radicals which are normally produced within the cells and which are toxic to biological systems.</text>
</comment>
<comment type="catalytic activity">
    <reaction>
        <text>2 superoxide + 2 H(+) = H2O2 + O2</text>
        <dbReference type="Rhea" id="RHEA:20696"/>
        <dbReference type="ChEBI" id="CHEBI:15378"/>
        <dbReference type="ChEBI" id="CHEBI:15379"/>
        <dbReference type="ChEBI" id="CHEBI:16240"/>
        <dbReference type="ChEBI" id="CHEBI:18421"/>
        <dbReference type="EC" id="1.15.1.1"/>
    </reaction>
</comment>
<comment type="cofactor">
    <cofactor evidence="1">
        <name>Mn(2+)</name>
        <dbReference type="ChEBI" id="CHEBI:29035"/>
    </cofactor>
    <text evidence="1">Binds 1 Mn(2+) ion per subunit.</text>
</comment>
<comment type="subunit">
    <text evidence="1">Homotetramer.</text>
</comment>
<comment type="subcellular location">
    <subcellularLocation>
        <location>Mitochondrion matrix</location>
    </subcellularLocation>
</comment>
<comment type="similarity">
    <text evidence="2">Belongs to the iron/manganese superoxide dismutase family.</text>
</comment>
<accession>P41980</accession>
<dbReference type="EC" id="1.15.1.1"/>
<dbReference type="EMBL" id="L19463">
    <property type="protein sequence ID" value="AAA72022.2"/>
    <property type="molecule type" value="mRNA"/>
</dbReference>
<dbReference type="PIR" id="B48684">
    <property type="entry name" value="B48684"/>
</dbReference>
<dbReference type="SMR" id="P41980"/>
<dbReference type="FunCoup" id="P41980">
    <property type="interactions" value="2657"/>
</dbReference>
<dbReference type="STRING" id="4577.P41980"/>
<dbReference type="PaxDb" id="4577-GRMZM2G124455_P01"/>
<dbReference type="MaizeGDB" id="47587"/>
<dbReference type="eggNOG" id="KOG0876">
    <property type="taxonomic scope" value="Eukaryota"/>
</dbReference>
<dbReference type="InParanoid" id="P41980"/>
<dbReference type="Proteomes" id="UP000007305">
    <property type="component" value="Unplaced"/>
</dbReference>
<dbReference type="ExpressionAtlas" id="P41980">
    <property type="expression patterns" value="baseline and differential"/>
</dbReference>
<dbReference type="GO" id="GO:0005759">
    <property type="term" value="C:mitochondrial matrix"/>
    <property type="evidence" value="ECO:0007669"/>
    <property type="project" value="UniProtKB-SubCell"/>
</dbReference>
<dbReference type="GO" id="GO:0005739">
    <property type="term" value="C:mitochondrion"/>
    <property type="evidence" value="ECO:0000318"/>
    <property type="project" value="GO_Central"/>
</dbReference>
<dbReference type="GO" id="GO:0030145">
    <property type="term" value="F:manganese ion binding"/>
    <property type="evidence" value="ECO:0000318"/>
    <property type="project" value="GO_Central"/>
</dbReference>
<dbReference type="GO" id="GO:0004784">
    <property type="term" value="F:superoxide dismutase activity"/>
    <property type="evidence" value="ECO:0000318"/>
    <property type="project" value="GO_Central"/>
</dbReference>
<dbReference type="GO" id="GO:0009737">
    <property type="term" value="P:response to abscisic acid"/>
    <property type="evidence" value="ECO:0000270"/>
    <property type="project" value="AgBase"/>
</dbReference>
<dbReference type="GO" id="GO:0006970">
    <property type="term" value="P:response to osmotic stress"/>
    <property type="evidence" value="ECO:0000270"/>
    <property type="project" value="AgBase"/>
</dbReference>
<dbReference type="FunFam" id="1.10.287.990:FF:000001">
    <property type="entry name" value="Superoxide dismutase"/>
    <property type="match status" value="1"/>
</dbReference>
<dbReference type="FunFam" id="3.55.40.20:FF:000002">
    <property type="entry name" value="Superoxide dismutase"/>
    <property type="match status" value="1"/>
</dbReference>
<dbReference type="Gene3D" id="1.10.287.990">
    <property type="entry name" value="Fe,Mn superoxide dismutase (SOD) domain"/>
    <property type="match status" value="1"/>
</dbReference>
<dbReference type="Gene3D" id="3.55.40.20">
    <property type="entry name" value="Iron/manganese superoxide dismutase, C-terminal domain"/>
    <property type="match status" value="1"/>
</dbReference>
<dbReference type="InterPro" id="IPR050265">
    <property type="entry name" value="Fe/Mn_Superoxide_Dismutase"/>
</dbReference>
<dbReference type="InterPro" id="IPR001189">
    <property type="entry name" value="Mn/Fe_SOD"/>
</dbReference>
<dbReference type="InterPro" id="IPR019833">
    <property type="entry name" value="Mn/Fe_SOD_BS"/>
</dbReference>
<dbReference type="InterPro" id="IPR019832">
    <property type="entry name" value="Mn/Fe_SOD_C"/>
</dbReference>
<dbReference type="InterPro" id="IPR019831">
    <property type="entry name" value="Mn/Fe_SOD_N"/>
</dbReference>
<dbReference type="InterPro" id="IPR036324">
    <property type="entry name" value="Mn/Fe_SOD_N_sf"/>
</dbReference>
<dbReference type="InterPro" id="IPR036314">
    <property type="entry name" value="SOD_C_sf"/>
</dbReference>
<dbReference type="PANTHER" id="PTHR11404">
    <property type="entry name" value="SUPEROXIDE DISMUTASE 2"/>
    <property type="match status" value="1"/>
</dbReference>
<dbReference type="PANTHER" id="PTHR11404:SF6">
    <property type="entry name" value="SUPEROXIDE DISMUTASE [MN], MITOCHONDRIAL"/>
    <property type="match status" value="1"/>
</dbReference>
<dbReference type="Pfam" id="PF02777">
    <property type="entry name" value="Sod_Fe_C"/>
    <property type="match status" value="1"/>
</dbReference>
<dbReference type="Pfam" id="PF00081">
    <property type="entry name" value="Sod_Fe_N"/>
    <property type="match status" value="1"/>
</dbReference>
<dbReference type="PIRSF" id="PIRSF000349">
    <property type="entry name" value="SODismutase"/>
    <property type="match status" value="1"/>
</dbReference>
<dbReference type="PRINTS" id="PR01703">
    <property type="entry name" value="MNSODISMTASE"/>
</dbReference>
<dbReference type="SUPFAM" id="SSF54719">
    <property type="entry name" value="Fe,Mn superoxide dismutase (SOD), C-terminal domain"/>
    <property type="match status" value="1"/>
</dbReference>
<dbReference type="SUPFAM" id="SSF46609">
    <property type="entry name" value="Fe,Mn superoxide dismutase (SOD), N-terminal domain"/>
    <property type="match status" value="1"/>
</dbReference>
<dbReference type="PROSITE" id="PS00088">
    <property type="entry name" value="SOD_MN"/>
    <property type="match status" value="1"/>
</dbReference>
<evidence type="ECO:0000250" key="1"/>
<evidence type="ECO:0000305" key="2"/>
<sequence length="233" mass="25239">MALRTLASKNALSFALGGAARPSAASARGVTTVALPDLSYDFGALEPAISGEIMRLHHQKHHATYVGNYNKALEQLDAAVAKGDASAVVQLQGAIKFNGGGHVNHSIFWKNLKPISEGGGEPPHGKLGWAIDEDFGSFEALVKRMNAEGAALQGSGWVWLALDKEPKKLSVETTANQDPLVTKGASLVPLLGIDVWEHAYYLQYKNVRPDYLNNIWKVMNWKYAGEVYENVLA</sequence>
<name>SODM4_MAIZE</name>
<feature type="transit peptide" description="Mitochondrion" evidence="1">
    <location>
        <begin position="1"/>
        <end position="29"/>
    </location>
</feature>
<feature type="chain" id="PRO_0000032898" description="Superoxide dismutase [Mn] 3.4, mitochondrial">
    <location>
        <begin position="30"/>
        <end position="233"/>
    </location>
</feature>
<feature type="binding site" evidence="1">
    <location>
        <position position="57"/>
    </location>
    <ligand>
        <name>Mn(2+)</name>
        <dbReference type="ChEBI" id="CHEBI:29035"/>
    </ligand>
</feature>
<feature type="binding site" evidence="1">
    <location>
        <position position="105"/>
    </location>
    <ligand>
        <name>Mn(2+)</name>
        <dbReference type="ChEBI" id="CHEBI:29035"/>
    </ligand>
</feature>
<feature type="binding site" evidence="1">
    <location>
        <position position="194"/>
    </location>
    <ligand>
        <name>Mn(2+)</name>
        <dbReference type="ChEBI" id="CHEBI:29035"/>
    </ligand>
</feature>
<feature type="binding site" evidence="1">
    <location>
        <position position="198"/>
    </location>
    <ligand>
        <name>Mn(2+)</name>
        <dbReference type="ChEBI" id="CHEBI:29035"/>
    </ligand>
</feature>
<protein>
    <recommendedName>
        <fullName>Superoxide dismutase [Mn] 3.4, mitochondrial</fullName>
        <ecNumber>1.15.1.1</ecNumber>
    </recommendedName>
</protein>
<proteinExistence type="evidence at transcript level"/>
<reference key="1">
    <citation type="journal article" date="1993" name="Proc. Natl. Acad. Sci. U.S.A.">
        <title>Maize mitochondrial manganese superoxide dismutases are encoded by a differentially expressed multigene family.</title>
        <authorList>
            <person name="Zhu D."/>
            <person name="Scandalios J.G."/>
        </authorList>
    </citation>
    <scope>NUCLEOTIDE SEQUENCE [MRNA]</scope>
</reference>
<keyword id="KW-0464">Manganese</keyword>
<keyword id="KW-0479">Metal-binding</keyword>
<keyword id="KW-0496">Mitochondrion</keyword>
<keyword id="KW-0560">Oxidoreductase</keyword>
<keyword id="KW-1185">Reference proteome</keyword>
<keyword id="KW-0809">Transit peptide</keyword>